<keyword id="KW-0963">Cytoplasm</keyword>
<keyword id="KW-0255">Endonuclease</keyword>
<keyword id="KW-0378">Hydrolase</keyword>
<keyword id="KW-0479">Metal-binding</keyword>
<keyword id="KW-0540">Nuclease</keyword>
<proteinExistence type="inferred from homology"/>
<protein>
    <recommendedName>
        <fullName evidence="1">Protein pelota homolog</fullName>
        <ecNumber evidence="1">3.1.-.-</ecNumber>
    </recommendedName>
</protein>
<organism>
    <name type="scientific">Halobacterium salinarum (strain ATCC 29341 / DSM 671 / R1)</name>
    <dbReference type="NCBI Taxonomy" id="478009"/>
    <lineage>
        <taxon>Archaea</taxon>
        <taxon>Methanobacteriati</taxon>
        <taxon>Methanobacteriota</taxon>
        <taxon>Stenosarchaea group</taxon>
        <taxon>Halobacteria</taxon>
        <taxon>Halobacteriales</taxon>
        <taxon>Halobacteriaceae</taxon>
        <taxon>Halobacterium</taxon>
        <taxon>Halobacterium salinarum NRC-34001</taxon>
    </lineage>
</organism>
<reference key="1">
    <citation type="journal article" date="2008" name="Genomics">
        <title>Evolution in the laboratory: the genome of Halobacterium salinarum strain R1 compared to that of strain NRC-1.</title>
        <authorList>
            <person name="Pfeiffer F."/>
            <person name="Schuster S.C."/>
            <person name="Broicher A."/>
            <person name="Falb M."/>
            <person name="Palm P."/>
            <person name="Rodewald K."/>
            <person name="Ruepp A."/>
            <person name="Soppa J."/>
            <person name="Tittor J."/>
            <person name="Oesterhelt D."/>
        </authorList>
    </citation>
    <scope>NUCLEOTIDE SEQUENCE [LARGE SCALE GENOMIC DNA]</scope>
    <source>
        <strain>ATCC 29341 / DSM 671 / R1</strain>
    </source>
</reference>
<gene>
    <name evidence="1" type="primary">pelA</name>
    <name type="ordered locus">OE_3152R</name>
</gene>
<comment type="function">
    <text evidence="1">May function in recognizing stalled ribosomes, interact with stem-loop structures in stalled mRNA molecules, and effect endonucleolytic cleavage of the mRNA. May play a role in the release non-functional ribosomes and degradation of damaged mRNAs. Has endoribonuclease activity.</text>
</comment>
<comment type="cofactor">
    <cofactor evidence="1">
        <name>a divalent metal cation</name>
        <dbReference type="ChEBI" id="CHEBI:60240"/>
    </cofactor>
</comment>
<comment type="subunit">
    <text evidence="1">Monomer.</text>
</comment>
<comment type="subcellular location">
    <subcellularLocation>
        <location evidence="1">Cytoplasm</location>
    </subcellularLocation>
</comment>
<comment type="domain">
    <text evidence="1">The N-terminal domain has the RNA-binding Sm fold. It harbors the endoribonuclease activity.</text>
</comment>
<comment type="similarity">
    <text evidence="1">Belongs to the eukaryotic release factor 1 family. Pelota subfamily.</text>
</comment>
<dbReference type="EC" id="3.1.-.-" evidence="1"/>
<dbReference type="EMBL" id="AM774415">
    <property type="protein sequence ID" value="CAP14086.1"/>
    <property type="molecule type" value="Genomic_DNA"/>
</dbReference>
<dbReference type="RefSeq" id="WP_010903099.1">
    <property type="nucleotide sequence ID" value="NC_010364.1"/>
</dbReference>
<dbReference type="SMR" id="B0R5R9"/>
<dbReference type="EnsemblBacteria" id="CAP14086">
    <property type="protein sequence ID" value="CAP14086"/>
    <property type="gene ID" value="OE_3152R"/>
</dbReference>
<dbReference type="KEGG" id="hsl:OE_3152R"/>
<dbReference type="HOGENOM" id="CLU_023334_0_0_2"/>
<dbReference type="PhylomeDB" id="B0R5R9"/>
<dbReference type="Proteomes" id="UP000001321">
    <property type="component" value="Chromosome"/>
</dbReference>
<dbReference type="GO" id="GO:0005737">
    <property type="term" value="C:cytoplasm"/>
    <property type="evidence" value="ECO:0007669"/>
    <property type="project" value="UniProtKB-SubCell"/>
</dbReference>
<dbReference type="GO" id="GO:0004519">
    <property type="term" value="F:endonuclease activity"/>
    <property type="evidence" value="ECO:0007669"/>
    <property type="project" value="UniProtKB-UniRule"/>
</dbReference>
<dbReference type="GO" id="GO:0046872">
    <property type="term" value="F:metal ion binding"/>
    <property type="evidence" value="ECO:0007669"/>
    <property type="project" value="UniProtKB-UniRule"/>
</dbReference>
<dbReference type="GO" id="GO:0070651">
    <property type="term" value="P:nonfunctional rRNA decay"/>
    <property type="evidence" value="ECO:0007669"/>
    <property type="project" value="TreeGrafter"/>
</dbReference>
<dbReference type="GO" id="GO:0070966">
    <property type="term" value="P:nuclear-transcribed mRNA catabolic process, no-go decay"/>
    <property type="evidence" value="ECO:0007669"/>
    <property type="project" value="InterPro"/>
</dbReference>
<dbReference type="GO" id="GO:0070481">
    <property type="term" value="P:nuclear-transcribed mRNA catabolic process, non-stop decay"/>
    <property type="evidence" value="ECO:0007669"/>
    <property type="project" value="InterPro"/>
</dbReference>
<dbReference type="GO" id="GO:0032790">
    <property type="term" value="P:ribosome disassembly"/>
    <property type="evidence" value="ECO:0007669"/>
    <property type="project" value="TreeGrafter"/>
</dbReference>
<dbReference type="GO" id="GO:0071025">
    <property type="term" value="P:RNA surveillance"/>
    <property type="evidence" value="ECO:0007669"/>
    <property type="project" value="InterPro"/>
</dbReference>
<dbReference type="FunFam" id="2.30.30.870:FF:000002">
    <property type="entry name" value="Protein pelota homolog"/>
    <property type="match status" value="1"/>
</dbReference>
<dbReference type="FunFam" id="3.30.1330.30:FF:000059">
    <property type="entry name" value="Protein pelota homolog"/>
    <property type="match status" value="1"/>
</dbReference>
<dbReference type="Gene3D" id="3.30.1330.30">
    <property type="match status" value="1"/>
</dbReference>
<dbReference type="Gene3D" id="3.30.420.60">
    <property type="entry name" value="eRF1 domain 2"/>
    <property type="match status" value="1"/>
</dbReference>
<dbReference type="Gene3D" id="2.30.30.870">
    <property type="entry name" value="Pelota, domain A"/>
    <property type="match status" value="1"/>
</dbReference>
<dbReference type="HAMAP" id="MF_01853">
    <property type="entry name" value="PelO"/>
    <property type="match status" value="1"/>
</dbReference>
<dbReference type="InterPro" id="IPR042226">
    <property type="entry name" value="eFR1_2_sf"/>
</dbReference>
<dbReference type="InterPro" id="IPR005140">
    <property type="entry name" value="eRF1_1_Pelota"/>
</dbReference>
<dbReference type="InterPro" id="IPR005141">
    <property type="entry name" value="eRF1_2"/>
</dbReference>
<dbReference type="InterPro" id="IPR005142">
    <property type="entry name" value="eRF1_3"/>
</dbReference>
<dbReference type="InterPro" id="IPR038069">
    <property type="entry name" value="Pelota/DOM34_N"/>
</dbReference>
<dbReference type="InterPro" id="IPR023521">
    <property type="entry name" value="Pelota_arc"/>
</dbReference>
<dbReference type="InterPro" id="IPR029064">
    <property type="entry name" value="Ribosomal_eL30-like_sf"/>
</dbReference>
<dbReference type="InterPro" id="IPR004405">
    <property type="entry name" value="Transl-rel_pelota"/>
</dbReference>
<dbReference type="NCBIfam" id="TIGR00111">
    <property type="entry name" value="pelota"/>
    <property type="match status" value="1"/>
</dbReference>
<dbReference type="PANTHER" id="PTHR10853">
    <property type="entry name" value="PELOTA"/>
    <property type="match status" value="1"/>
</dbReference>
<dbReference type="PANTHER" id="PTHR10853:SF0">
    <property type="entry name" value="PROTEIN PELOTA HOMOLOG"/>
    <property type="match status" value="1"/>
</dbReference>
<dbReference type="Pfam" id="PF03463">
    <property type="entry name" value="eRF1_1"/>
    <property type="match status" value="1"/>
</dbReference>
<dbReference type="Pfam" id="PF03464">
    <property type="entry name" value="eRF1_2"/>
    <property type="match status" value="1"/>
</dbReference>
<dbReference type="Pfam" id="PF03465">
    <property type="entry name" value="eRF1_3"/>
    <property type="match status" value="1"/>
</dbReference>
<dbReference type="SMART" id="SM01194">
    <property type="entry name" value="eRF1_1"/>
    <property type="match status" value="1"/>
</dbReference>
<dbReference type="SUPFAM" id="SSF159065">
    <property type="entry name" value="Dom34/Pelota N-terminal domain-like"/>
    <property type="match status" value="1"/>
</dbReference>
<dbReference type="SUPFAM" id="SSF55315">
    <property type="entry name" value="L30e-like"/>
    <property type="match status" value="1"/>
</dbReference>
<dbReference type="SUPFAM" id="SSF53137">
    <property type="entry name" value="Translational machinery components"/>
    <property type="match status" value="1"/>
</dbReference>
<accession>B0R5R9</accession>
<evidence type="ECO:0000255" key="1">
    <source>
        <dbReference type="HAMAP-Rule" id="MF_01853"/>
    </source>
</evidence>
<sequence length="357" mass="39832">MQLKDRHTVEGGRERITLVPESLDDLWHLAYVLEPGDFVAGDTHRRIQRNDDQMRDTGGEREHMFVTIDVGDVEFHKFSNRLRVSGTIEDCSREDQLGLHHTLNVAEREELEVEKHWQPDQLNRLNEAVEATDQPDVAIATVEEGEAHIHVVQQYGVDEQGSFTATTGKGEQNDRGRDELFGTLADALARMQADAIILAGPGFTKQDALDHITEEYPDLQETITMVDTSAVGGRGVHEVLKRGAVEDVQEETRIAEESELIDELTTQMATDGKAAYGIDEVQKAVEFGAVEDLLILDERLRLERAGEGDWVDVDVNDLVRTVEQQGGSVTVFSHEFAPGEQLRNLGGIGAVLRYRLD</sequence>
<name>PELO_HALS3</name>
<feature type="chain" id="PRO_0000361785" description="Protein pelota homolog">
    <location>
        <begin position="1"/>
        <end position="357"/>
    </location>
</feature>